<dbReference type="EMBL" id="L25052">
    <property type="protein sequence ID" value="AAA19639.1"/>
    <property type="molecule type" value="mRNA"/>
</dbReference>
<dbReference type="PIR" id="S42409">
    <property type="entry name" value="S42409"/>
</dbReference>
<dbReference type="RefSeq" id="NP_001003326.1">
    <property type="nucleotide sequence ID" value="NM_001003326.1"/>
</dbReference>
<dbReference type="PDB" id="2WWB">
    <property type="method" value="EM"/>
    <property type="resolution" value="6.48 A"/>
    <property type="chains" value="C=1-96"/>
</dbReference>
<dbReference type="PDB" id="4CG5">
    <property type="method" value="EM"/>
    <property type="resolution" value="7.40 A"/>
    <property type="chains" value="C=61-96"/>
</dbReference>
<dbReference type="PDB" id="4CG6">
    <property type="method" value="EM"/>
    <property type="resolution" value="7.80 A"/>
    <property type="chains" value="C=1-96"/>
</dbReference>
<dbReference type="PDB" id="4CG7">
    <property type="method" value="EM"/>
    <property type="resolution" value="6.90 A"/>
    <property type="chains" value="C=61-96"/>
</dbReference>
<dbReference type="PDB" id="5A6U">
    <property type="method" value="EM"/>
    <property type="resolution" value="9.00 A"/>
    <property type="chains" value="B=61-96"/>
</dbReference>
<dbReference type="PDB" id="6FTG">
    <property type="method" value="EM"/>
    <property type="resolution" value="9.10 A"/>
    <property type="chains" value="z=68-96"/>
</dbReference>
<dbReference type="PDB" id="6FTI">
    <property type="method" value="EM"/>
    <property type="resolution" value="4.20 A"/>
    <property type="chains" value="z=68-96"/>
</dbReference>
<dbReference type="PDB" id="6FTJ">
    <property type="method" value="EM"/>
    <property type="resolution" value="4.70 A"/>
    <property type="chains" value="z=68-96"/>
</dbReference>
<dbReference type="PDB" id="6R7Q">
    <property type="method" value="EM"/>
    <property type="resolution" value="3.90 A"/>
    <property type="chains" value="ZZ=68-96"/>
</dbReference>
<dbReference type="PDB" id="7TM3">
    <property type="method" value="EM"/>
    <property type="resolution" value="3.25 A"/>
    <property type="chains" value="2=1-96"/>
</dbReference>
<dbReference type="PDB" id="7TUT">
    <property type="method" value="EM"/>
    <property type="resolution" value="3.88 A"/>
    <property type="chains" value="2=1-96"/>
</dbReference>
<dbReference type="PDB" id="8BTK">
    <property type="method" value="EM"/>
    <property type="resolution" value="3.50 A"/>
    <property type="chains" value="SZ=1-96"/>
</dbReference>
<dbReference type="PDB" id="8RJB">
    <property type="method" value="EM"/>
    <property type="resolution" value="2.69 A"/>
    <property type="chains" value="2=1-96"/>
</dbReference>
<dbReference type="PDB" id="8RJC">
    <property type="method" value="EM"/>
    <property type="resolution" value="2.90 A"/>
    <property type="chains" value="2=1-96"/>
</dbReference>
<dbReference type="PDB" id="8RJD">
    <property type="method" value="EM"/>
    <property type="resolution" value="2.79 A"/>
    <property type="chains" value="2=1-96"/>
</dbReference>
<dbReference type="PDBsum" id="2WWB"/>
<dbReference type="PDBsum" id="4CG5"/>
<dbReference type="PDBsum" id="4CG6"/>
<dbReference type="PDBsum" id="4CG7"/>
<dbReference type="PDBsum" id="5A6U"/>
<dbReference type="PDBsum" id="6FTG"/>
<dbReference type="PDBsum" id="6FTI"/>
<dbReference type="PDBsum" id="6FTJ"/>
<dbReference type="PDBsum" id="6R7Q"/>
<dbReference type="PDBsum" id="7TM3"/>
<dbReference type="PDBsum" id="7TUT"/>
<dbReference type="PDBsum" id="8BTK"/>
<dbReference type="PDBsum" id="8RJB"/>
<dbReference type="PDBsum" id="8RJC"/>
<dbReference type="PDBsum" id="8RJD"/>
<dbReference type="EMDB" id="EMD-16232"/>
<dbReference type="EMDB" id="EMD-19195"/>
<dbReference type="EMDB" id="EMD-19197"/>
<dbReference type="EMDB" id="EMD-19198"/>
<dbReference type="EMDB" id="EMD-25994"/>
<dbReference type="EMDB" id="EMD-26133"/>
<dbReference type="EMDB" id="EMD-4315"/>
<dbReference type="EMDB" id="EMD-4316"/>
<dbReference type="EMDB" id="EMD-4317"/>
<dbReference type="EMDB" id="EMD-4745"/>
<dbReference type="SMR" id="P60467"/>
<dbReference type="BioGRID" id="139931">
    <property type="interactions" value="1"/>
</dbReference>
<dbReference type="CORUM" id="P60467"/>
<dbReference type="FunCoup" id="P60467">
    <property type="interactions" value="1098"/>
</dbReference>
<dbReference type="IntAct" id="P60467">
    <property type="interactions" value="1"/>
</dbReference>
<dbReference type="MINT" id="P60467"/>
<dbReference type="STRING" id="9615.ENSCAFP00000003690"/>
<dbReference type="PaxDb" id="9612-ENSCAFP00000003690"/>
<dbReference type="Ensembl" id="ENSCAFT00000003996.4">
    <property type="protein sequence ID" value="ENSCAFP00000003690.2"/>
    <property type="gene ID" value="ENSCAFG00000002533.4"/>
</dbReference>
<dbReference type="Ensembl" id="ENSCAFT00030035555.1">
    <property type="protein sequence ID" value="ENSCAFP00030031011.1"/>
    <property type="gene ID" value="ENSCAFG00030019313.1"/>
</dbReference>
<dbReference type="Ensembl" id="ENSCAFT00040037323.1">
    <property type="protein sequence ID" value="ENSCAFP00040032525.1"/>
    <property type="gene ID" value="ENSCAFG00040020183.1"/>
</dbReference>
<dbReference type="Ensembl" id="ENSCAFT00845013672.1">
    <property type="protein sequence ID" value="ENSCAFP00845010616.1"/>
    <property type="gene ID" value="ENSCAFG00845007765.1"/>
</dbReference>
<dbReference type="GeneID" id="404018"/>
<dbReference type="KEGG" id="cfa:404018"/>
<dbReference type="CTD" id="10952"/>
<dbReference type="VEuPathDB" id="HostDB:ENSCAFG00845007765"/>
<dbReference type="VGNC" id="VGNC:49616">
    <property type="gene designation" value="SEC61B"/>
</dbReference>
<dbReference type="eggNOG" id="KOG3457">
    <property type="taxonomic scope" value="Eukaryota"/>
</dbReference>
<dbReference type="GeneTree" id="ENSGT00940000171174"/>
<dbReference type="HOGENOM" id="CLU_133423_4_0_1"/>
<dbReference type="InParanoid" id="P60467"/>
<dbReference type="OMA" id="SSGMWRF"/>
<dbReference type="OrthoDB" id="5401193at2759"/>
<dbReference type="TreeFam" id="TF313144"/>
<dbReference type="Reactome" id="R-CFA-9609523">
    <property type="pathway name" value="Insertion of tail-anchored proteins into the endoplasmic reticulum membrane"/>
</dbReference>
<dbReference type="EvolutionaryTrace" id="P60467"/>
<dbReference type="Proteomes" id="UP000002254">
    <property type="component" value="Chromosome 11"/>
</dbReference>
<dbReference type="Proteomes" id="UP000694429">
    <property type="component" value="Chromosome 11"/>
</dbReference>
<dbReference type="Proteomes" id="UP000694542">
    <property type="component" value="Chromosome 11"/>
</dbReference>
<dbReference type="Proteomes" id="UP000805418">
    <property type="component" value="Chromosome 11"/>
</dbReference>
<dbReference type="Bgee" id="ENSCAFG00000002533">
    <property type="expression patterns" value="Expressed in pancreas and 47 other cell types or tissues"/>
</dbReference>
<dbReference type="GO" id="GO:0005783">
    <property type="term" value="C:endoplasmic reticulum"/>
    <property type="evidence" value="ECO:0000304"/>
    <property type="project" value="ProtInc"/>
</dbReference>
<dbReference type="GO" id="GO:0005789">
    <property type="term" value="C:endoplasmic reticulum membrane"/>
    <property type="evidence" value="ECO:0000250"/>
    <property type="project" value="UniProtKB"/>
</dbReference>
<dbReference type="GO" id="GO:0031205">
    <property type="term" value="C:endoplasmic reticulum Sec complex"/>
    <property type="evidence" value="ECO:0000250"/>
    <property type="project" value="UniProtKB"/>
</dbReference>
<dbReference type="GO" id="GO:0016020">
    <property type="term" value="C:membrane"/>
    <property type="evidence" value="ECO:0000318"/>
    <property type="project" value="GO_Central"/>
</dbReference>
<dbReference type="GO" id="GO:0005784">
    <property type="term" value="C:Sec61 translocon complex"/>
    <property type="evidence" value="ECO:0000318"/>
    <property type="project" value="GO_Central"/>
</dbReference>
<dbReference type="GO" id="GO:0005085">
    <property type="term" value="F:guanyl-nucleotide exchange factor activity"/>
    <property type="evidence" value="ECO:0000318"/>
    <property type="project" value="GO_Central"/>
</dbReference>
<dbReference type="GO" id="GO:0015450">
    <property type="term" value="F:protein-transporting ATPase activity"/>
    <property type="evidence" value="ECO:0000304"/>
    <property type="project" value="ProtInc"/>
</dbReference>
<dbReference type="GO" id="GO:0043022">
    <property type="term" value="F:ribosome binding"/>
    <property type="evidence" value="ECO:0000250"/>
    <property type="project" value="UniProtKB"/>
</dbReference>
<dbReference type="GO" id="GO:0031204">
    <property type="term" value="P:post-translational protein targeting to membrane, translocation"/>
    <property type="evidence" value="ECO:0000318"/>
    <property type="project" value="GO_Central"/>
</dbReference>
<dbReference type="GO" id="GO:0006616">
    <property type="term" value="P:SRP-dependent cotranslational protein targeting to membrane, translocation"/>
    <property type="evidence" value="ECO:0000318"/>
    <property type="project" value="GO_Central"/>
</dbReference>
<dbReference type="InterPro" id="IPR030671">
    <property type="entry name" value="Sec61-beta/Sbh"/>
</dbReference>
<dbReference type="InterPro" id="IPR016482">
    <property type="entry name" value="SecG/Sec61-beta/Sbh"/>
</dbReference>
<dbReference type="PANTHER" id="PTHR13509">
    <property type="entry name" value="SEC61 SUBUNIT BETA"/>
    <property type="match status" value="1"/>
</dbReference>
<dbReference type="Pfam" id="PF03911">
    <property type="entry name" value="Sec61_beta"/>
    <property type="match status" value="1"/>
</dbReference>
<dbReference type="PIRSF" id="PIRSF006398">
    <property type="entry name" value="Sec61_beta_euk"/>
    <property type="match status" value="1"/>
</dbReference>
<evidence type="ECO:0000250" key="1"/>
<evidence type="ECO:0000250" key="2">
    <source>
        <dbReference type="UniProtKB" id="P60468"/>
    </source>
</evidence>
<evidence type="ECO:0000250" key="3">
    <source>
        <dbReference type="UniProtKB" id="P61619"/>
    </source>
</evidence>
<evidence type="ECO:0000256" key="4">
    <source>
        <dbReference type="SAM" id="MobiDB-lite"/>
    </source>
</evidence>
<evidence type="ECO:0000269" key="5">
    <source>
    </source>
</evidence>
<evidence type="ECO:0000269" key="6">
    <source>
    </source>
</evidence>
<evidence type="ECO:0000269" key="7">
    <source>
    </source>
</evidence>
<evidence type="ECO:0000269" key="8">
    <source>
    </source>
</evidence>
<evidence type="ECO:0000305" key="9"/>
<evidence type="ECO:0007744" key="10">
    <source>
        <dbReference type="PDB" id="7TM3"/>
    </source>
</evidence>
<evidence type="ECO:0007744" key="11">
    <source>
        <dbReference type="PDB" id="7TUT"/>
    </source>
</evidence>
<sequence>MPGPTPSGTNVGSSGRSPSKAVAARAAGSTVRQRKNASCGTRSAGRTTSAGTGGMWRFYTEDSPGLKVGPVPVLVMSLLFIASVFMLHIWGKYTRS</sequence>
<proteinExistence type="evidence at protein level"/>
<organism>
    <name type="scientific">Canis lupus familiaris</name>
    <name type="common">Dog</name>
    <name type="synonym">Canis familiaris</name>
    <dbReference type="NCBI Taxonomy" id="9615"/>
    <lineage>
        <taxon>Eukaryota</taxon>
        <taxon>Metazoa</taxon>
        <taxon>Chordata</taxon>
        <taxon>Craniata</taxon>
        <taxon>Vertebrata</taxon>
        <taxon>Euteleostomi</taxon>
        <taxon>Mammalia</taxon>
        <taxon>Eutheria</taxon>
        <taxon>Laurasiatheria</taxon>
        <taxon>Carnivora</taxon>
        <taxon>Caniformia</taxon>
        <taxon>Canidae</taxon>
        <taxon>Canis</taxon>
    </lineage>
</organism>
<feature type="initiator methionine" description="Removed" evidence="2 8">
    <location>
        <position position="1"/>
    </location>
</feature>
<feature type="chain" id="PRO_0000157253" description="Protein transport protein Sec61 subunit beta">
    <location>
        <begin position="2"/>
        <end position="96"/>
    </location>
</feature>
<feature type="topological domain" description="Cytoplasmic" evidence="7 10 11">
    <location>
        <begin position="2"/>
        <end position="71"/>
    </location>
</feature>
<feature type="transmembrane region" description="Helical" evidence="7 10 11">
    <location>
        <begin position="72"/>
        <end position="91"/>
    </location>
</feature>
<feature type="topological domain" description="Lumenal" evidence="7 10 11">
    <location>
        <begin position="92"/>
        <end position="96"/>
    </location>
</feature>
<feature type="region of interest" description="Disordered" evidence="4">
    <location>
        <begin position="1"/>
        <end position="54"/>
    </location>
</feature>
<feature type="compositionally biased region" description="Polar residues" evidence="4">
    <location>
        <begin position="1"/>
        <end position="17"/>
    </location>
</feature>
<feature type="compositionally biased region" description="Low complexity" evidence="4">
    <location>
        <begin position="40"/>
        <end position="50"/>
    </location>
</feature>
<feature type="modified residue" description="N-acetylproline" evidence="2">
    <location>
        <position position="2"/>
    </location>
</feature>
<feature type="modified residue" description="Phosphoserine" evidence="2">
    <location>
        <position position="7"/>
    </location>
</feature>
<feature type="modified residue" description="Phosphothreonine" evidence="2">
    <location>
        <position position="9"/>
    </location>
</feature>
<feature type="modified residue" description="Phosphoserine" evidence="2">
    <location>
        <position position="13"/>
    </location>
</feature>
<feature type="modified residue" description="Phosphoserine" evidence="2">
    <location>
        <position position="14"/>
    </location>
</feature>
<feature type="modified residue" description="Phosphoserine" evidence="2">
    <location>
        <position position="17"/>
    </location>
</feature>
<feature type="lipid moiety-binding region" description="S-palmitoyl cysteine" evidence="1">
    <location>
        <position position="39"/>
    </location>
</feature>
<accession>P60467</accession>
<accession>P38390</accession>
<accession>P38391</accession>
<comment type="function">
    <text evidence="3 7 8">Component of SEC61 channel-forming translocon complex that mediates transport of signal peptide-containing precursor polypeptides across the endoplasmic reticulum (ER) (PubMed:8107851). Forms a ribosome receptor and a gated pore in the ER membrane, both functions required for cotranslational translocation of nascent polypeptides (PubMed:8107851). The SEC61 channel is also involved in ER membrane insertion of transmembrane proteins: it mediates membrane insertion of the first few transmembrane segments of proteins, while insertion of subsequent transmembrane regions of multi-pass membrane proteins is mediated by the multi-pass translocon (MPT) complex (PubMed:36261528). The SEC61 channel cooperates with the translocating protein TRAM1 to import nascent proteins into the ER (By similarity).</text>
</comment>
<comment type="subunit">
    <text evidence="2 5 6 7 8">The SEC61 channel-forming translocon complex consists of channel-forming core components SEC61A1, SEC61B and SEC61G and different auxiliary components such as SEC62 and SEC63 (PubMed:10799540, PubMed:10860986, PubMed:36261528, PubMed:8107851). The SEC61 channel associates with the multi-pass translocon (MPT) complex (PubMed:36261528). Interacts with TRAM1 (By similarity).</text>
</comment>
<comment type="subcellular location">
    <subcellularLocation>
        <location evidence="7">Endoplasmic reticulum membrane</location>
        <topology evidence="7">Single-pass membrane protein</topology>
    </subcellularLocation>
</comment>
<comment type="similarity">
    <text evidence="9">Belongs to the SEC61-beta family.</text>
</comment>
<name>SC61B_CANLF</name>
<gene>
    <name type="primary">SEC61B</name>
</gene>
<protein>
    <recommendedName>
        <fullName>Protein transport protein Sec61 subunit beta</fullName>
    </recommendedName>
</protein>
<keyword id="KW-0002">3D-structure</keyword>
<keyword id="KW-0007">Acetylation</keyword>
<keyword id="KW-0903">Direct protein sequencing</keyword>
<keyword id="KW-0256">Endoplasmic reticulum</keyword>
<keyword id="KW-0449">Lipoprotein</keyword>
<keyword id="KW-0472">Membrane</keyword>
<keyword id="KW-0564">Palmitate</keyword>
<keyword id="KW-0597">Phosphoprotein</keyword>
<keyword id="KW-0653">Protein transport</keyword>
<keyword id="KW-1185">Reference proteome</keyword>
<keyword id="KW-0811">Translocation</keyword>
<keyword id="KW-0812">Transmembrane</keyword>
<keyword id="KW-1133">Transmembrane helix</keyword>
<keyword id="KW-0813">Transport</keyword>
<reference key="1">
    <citation type="journal article" date="1994" name="Nature">
        <title>Evolutionary conservation of components of the protein translocation complex.</title>
        <authorList>
            <person name="Hartmann E."/>
            <person name="Sommer T."/>
            <person name="Prehn S."/>
            <person name="Goerlich D."/>
            <person name="Jentsch S."/>
            <person name="Rapoport T.A."/>
        </authorList>
    </citation>
    <scope>NUCLEOTIDE SEQUENCE [MRNA]</scope>
    <scope>PROTEIN SEQUENCE OF 2-16; 78-81; 83-86 AND 88-97</scope>
    <scope>SUBUNIT</scope>
    <scope>FUNCTION</scope>
    <source>
        <strain>Cocker spaniel</strain>
        <tissue>Kidney</tissue>
    </source>
</reference>
<reference key="2">
    <citation type="journal article" date="2000" name="J. Biol. Chem.">
        <title>Mammalian Sec61 is associated with Sec62 and Sec63.</title>
        <authorList>
            <person name="Meyer H.-A."/>
            <person name="Grau H."/>
            <person name="Kraft R."/>
            <person name="Kostka S."/>
            <person name="Prehn S."/>
            <person name="Kalies K.-U."/>
            <person name="Hartmann E."/>
        </authorList>
    </citation>
    <scope>SUBUNIT</scope>
</reference>
<reference key="3">
    <citation type="journal article" date="2000" name="Proc. Natl. Acad. Sci. U.S.A.">
        <title>Homologs of the yeast Sec complex subunits Sec62p and Sec63p are abundant proteins in dog pancreas microsomes.</title>
        <authorList>
            <person name="Tyedmers J."/>
            <person name="Lerner M."/>
            <person name="Bies C."/>
            <person name="Dudek J."/>
            <person name="Skowronek M.H."/>
            <person name="Haas I.G."/>
            <person name="Heim N."/>
            <person name="Nastainczyk W."/>
            <person name="Volkmer J."/>
            <person name="Zimmermann R."/>
        </authorList>
    </citation>
    <scope>SUBUNIT</scope>
</reference>
<reference key="4">
    <citation type="journal article" date="2022" name="Nature">
        <title>Mechanism of an intramembrane chaperone for multipass membrane proteins.</title>
        <authorList>
            <person name="Smalinskaite L."/>
            <person name="Kim M.K."/>
            <person name="Lewis A.J.O."/>
            <person name="Keenan R.J."/>
            <person name="Hegde R.S."/>
        </authorList>
    </citation>
    <scope>STRUCTURE BY ELECTRON MICROSCOPY (3.88 ANGSTROMS) IN COMPLEX WITH THE MULTI-PASS TRANSLOCON COMPLEX</scope>
    <scope>FUNCTION</scope>
    <scope>SUBCELLULAR LOCATION</scope>
    <scope>INTERACTION WITH THE MULTI-PASS TRANSLOCON COMPLEX</scope>
</reference>